<reference key="1">
    <citation type="journal article" date="2005" name="Nature">
        <title>Virology: independent virus development outside a host.</title>
        <authorList>
            <person name="Haring M."/>
            <person name="Vestergaard G."/>
            <person name="Rachel R."/>
            <person name="Chen L."/>
            <person name="Garrett R.A."/>
            <person name="Prangishvili D."/>
        </authorList>
    </citation>
    <scope>NUCLEOTIDE SEQUENCE [GENOMIC DNA]</scope>
</reference>
<sequence length="286" mass="33217">MVRILNFFEINENASDQENIISAPYDVYIPLMREKYEQIKLGRYDKTEYPENFPQQYRTGRGIAYFSEMVYEAFRGGLFNQFIVEGQQGAGKSSFALWVARAIYGNWHDALKHVVIDPFQLRQIILVAEANSITIPLIVVDDAGLFFSKGLAYRRQTGRMQTIQRLLQVIRTAVSNIILTTPNEEELSGIVIRQPKQYKIIIEKQNELVSKARVYEEEIQPLRGKKITRRLKLRDDIEKNLRTPLDFLEVAQNAHEVNLPRHIDDTAYQIYMKLRGLYTAIALRTS</sequence>
<name>Y286_ATV</name>
<protein>
    <recommendedName>
        <fullName>Uncharacterized protein ORF286</fullName>
    </recommendedName>
</protein>
<feature type="chain" id="PRO_0000389091" description="Uncharacterized protein ORF286">
    <location>
        <begin position="1"/>
        <end position="286"/>
    </location>
</feature>
<keyword id="KW-1185">Reference proteome</keyword>
<organismHost>
    <name type="scientific">Acidianus convivator</name>
    <dbReference type="NCBI Taxonomy" id="269667"/>
</organismHost>
<accession>Q3V4R0</accession>
<proteinExistence type="predicted"/>
<organism>
    <name type="scientific">Acidianus two-tailed virus</name>
    <name type="common">ATV</name>
    <dbReference type="NCBI Taxonomy" id="315953"/>
    <lineage>
        <taxon>Viruses</taxon>
        <taxon>Viruses incertae sedis</taxon>
        <taxon>Bicaudaviridae</taxon>
        <taxon>Bicaudavirus</taxon>
    </lineage>
</organism>
<dbReference type="EMBL" id="AJ888457">
    <property type="protein sequence ID" value="CAI59904.1"/>
    <property type="molecule type" value="Genomic_DNA"/>
</dbReference>
<dbReference type="RefSeq" id="YP_319886.1">
    <property type="nucleotide sequence ID" value="NC_007409.1"/>
</dbReference>
<dbReference type="GeneID" id="4484260"/>
<dbReference type="KEGG" id="vg:4484260"/>
<dbReference type="OrthoDB" id="24004at10239"/>
<dbReference type="Proteomes" id="UP000002150">
    <property type="component" value="Genome"/>
</dbReference>
<dbReference type="InterPro" id="IPR027417">
    <property type="entry name" value="P-loop_NTPase"/>
</dbReference>
<dbReference type="SUPFAM" id="SSF52540">
    <property type="entry name" value="P-loop containing nucleoside triphosphate hydrolases"/>
    <property type="match status" value="1"/>
</dbReference>